<keyword id="KW-0093">Biotin biosynthesis</keyword>
<keyword id="KW-0663">Pyridoxal phosphate</keyword>
<keyword id="KW-1185">Reference proteome</keyword>
<keyword id="KW-0808">Transferase</keyword>
<name>BIOF_ECO24</name>
<comment type="function">
    <text evidence="1">Catalyzes the decarboxylative condensation of pimeloyl-[acyl-carrier protein] and L-alanine to produce 8-amino-7-oxononanoate (AON), [acyl-carrier protein], and carbon dioxide.</text>
</comment>
<comment type="catalytic activity">
    <reaction evidence="1">
        <text>6-carboxyhexanoyl-[ACP] + L-alanine + H(+) = (8S)-8-amino-7-oxononanoate + holo-[ACP] + CO2</text>
        <dbReference type="Rhea" id="RHEA:42288"/>
        <dbReference type="Rhea" id="RHEA-COMP:9685"/>
        <dbReference type="Rhea" id="RHEA-COMP:9955"/>
        <dbReference type="ChEBI" id="CHEBI:15378"/>
        <dbReference type="ChEBI" id="CHEBI:16526"/>
        <dbReference type="ChEBI" id="CHEBI:57972"/>
        <dbReference type="ChEBI" id="CHEBI:64479"/>
        <dbReference type="ChEBI" id="CHEBI:78846"/>
        <dbReference type="ChEBI" id="CHEBI:149468"/>
        <dbReference type="EC" id="2.3.1.47"/>
    </reaction>
</comment>
<comment type="cofactor">
    <cofactor evidence="1">
        <name>pyridoxal 5'-phosphate</name>
        <dbReference type="ChEBI" id="CHEBI:597326"/>
    </cofactor>
</comment>
<comment type="pathway">
    <text evidence="1">Cofactor biosynthesis; biotin biosynthesis.</text>
</comment>
<comment type="subunit">
    <text evidence="1">Homodimer.</text>
</comment>
<comment type="similarity">
    <text evidence="1">Belongs to the class-II pyridoxal-phosphate-dependent aminotransferase family. BioF subfamily.</text>
</comment>
<sequence>MSWQEKINAALDARRAADALRRRYPVAQGAGRWLVADDRQYLNFSSNDYLGLSHHPQIIRAWQQGAEQFGVGSGGSGHVSGYSVAHQALEEELAEWLGYSRALLFISGFAANQAVIAAMMAKEDRIVADRLSHASLLEAASLSPSQLRRFAHNDVTHLARLLASPCPGQQLVVTEGVFSMDGDSAPLAEIQQVTQQHNGWLMVDDAHGTGVIGEQGRGSCWLQKVKPELLVVTFGKGFGVSGAAVLCSSTVADYLLQFARHLIYSTSMPPAQAQALRASLAVIRRDEGDARREKLVSLIARFRAGVQDLPFTLADSCSAIQPLIVGDNSRALQLAEKLRQQGCWVTAIRPPTVPAGTARLRLTLTAAHEMQDIDRLLEVLHGNG</sequence>
<protein>
    <recommendedName>
        <fullName evidence="1">8-amino-7-oxononanoate synthase</fullName>
        <shortName evidence="1">AONS</shortName>
        <ecNumber evidence="1">2.3.1.47</ecNumber>
    </recommendedName>
    <alternativeName>
        <fullName evidence="1">7-keto-8-amino-pelargonic acid synthase</fullName>
        <shortName evidence="1">7-KAP synthase</shortName>
        <shortName evidence="1">KAPA synthase</shortName>
    </alternativeName>
    <alternativeName>
        <fullName evidence="1">8-amino-7-ketopelargonate synthase</fullName>
    </alternativeName>
</protein>
<proteinExistence type="inferred from homology"/>
<reference key="1">
    <citation type="journal article" date="2008" name="J. Bacteriol.">
        <title>The pangenome structure of Escherichia coli: comparative genomic analysis of E. coli commensal and pathogenic isolates.</title>
        <authorList>
            <person name="Rasko D.A."/>
            <person name="Rosovitz M.J."/>
            <person name="Myers G.S.A."/>
            <person name="Mongodin E.F."/>
            <person name="Fricke W.F."/>
            <person name="Gajer P."/>
            <person name="Crabtree J."/>
            <person name="Sebaihia M."/>
            <person name="Thomson N.R."/>
            <person name="Chaudhuri R."/>
            <person name="Henderson I.R."/>
            <person name="Sperandio V."/>
            <person name="Ravel J."/>
        </authorList>
    </citation>
    <scope>NUCLEOTIDE SEQUENCE [LARGE SCALE GENOMIC DNA]</scope>
    <source>
        <strain>E24377A / ETEC</strain>
    </source>
</reference>
<dbReference type="EC" id="2.3.1.47" evidence="1"/>
<dbReference type="EMBL" id="CP000800">
    <property type="protein sequence ID" value="ABV19065.1"/>
    <property type="molecule type" value="Genomic_DNA"/>
</dbReference>
<dbReference type="RefSeq" id="WP_000118833.1">
    <property type="nucleotide sequence ID" value="NC_009801.1"/>
</dbReference>
<dbReference type="SMR" id="A7ZJI5"/>
<dbReference type="KEGG" id="ecw:EcE24377A_0839"/>
<dbReference type="HOGENOM" id="CLU_015846_11_2_6"/>
<dbReference type="UniPathway" id="UPA00078"/>
<dbReference type="Proteomes" id="UP000001122">
    <property type="component" value="Chromosome"/>
</dbReference>
<dbReference type="GO" id="GO:0008710">
    <property type="term" value="F:8-amino-7-oxononanoate synthase activity"/>
    <property type="evidence" value="ECO:0007669"/>
    <property type="project" value="UniProtKB-UniRule"/>
</dbReference>
<dbReference type="GO" id="GO:0030170">
    <property type="term" value="F:pyridoxal phosphate binding"/>
    <property type="evidence" value="ECO:0007669"/>
    <property type="project" value="UniProtKB-UniRule"/>
</dbReference>
<dbReference type="GO" id="GO:0009102">
    <property type="term" value="P:biotin biosynthetic process"/>
    <property type="evidence" value="ECO:0007669"/>
    <property type="project" value="UniProtKB-UniRule"/>
</dbReference>
<dbReference type="CDD" id="cd06454">
    <property type="entry name" value="KBL_like"/>
    <property type="match status" value="1"/>
</dbReference>
<dbReference type="FunFam" id="3.40.640.10:FF:000095">
    <property type="entry name" value="8-amino-7-oxononanoate synthase"/>
    <property type="match status" value="1"/>
</dbReference>
<dbReference type="FunFam" id="3.90.1150.10:FF:000036">
    <property type="entry name" value="8-amino-7-oxononanoate synthase"/>
    <property type="match status" value="1"/>
</dbReference>
<dbReference type="Gene3D" id="3.90.1150.10">
    <property type="entry name" value="Aspartate Aminotransferase, domain 1"/>
    <property type="match status" value="1"/>
</dbReference>
<dbReference type="Gene3D" id="3.40.640.10">
    <property type="entry name" value="Type I PLP-dependent aspartate aminotransferase-like (Major domain)"/>
    <property type="match status" value="1"/>
</dbReference>
<dbReference type="HAMAP" id="MF_01693">
    <property type="entry name" value="BioF_aminotrans_2"/>
    <property type="match status" value="1"/>
</dbReference>
<dbReference type="InterPro" id="IPR001917">
    <property type="entry name" value="Aminotrans_II_pyridoxalP_BS"/>
</dbReference>
<dbReference type="InterPro" id="IPR004839">
    <property type="entry name" value="Aminotransferase_I/II_large"/>
</dbReference>
<dbReference type="InterPro" id="IPR050087">
    <property type="entry name" value="AON_synthase_class-II"/>
</dbReference>
<dbReference type="InterPro" id="IPR004723">
    <property type="entry name" value="AONS_Archaea/Proteobacteria"/>
</dbReference>
<dbReference type="InterPro" id="IPR022834">
    <property type="entry name" value="AONS_Proteobacteria"/>
</dbReference>
<dbReference type="InterPro" id="IPR015424">
    <property type="entry name" value="PyrdxlP-dep_Trfase"/>
</dbReference>
<dbReference type="InterPro" id="IPR015421">
    <property type="entry name" value="PyrdxlP-dep_Trfase_major"/>
</dbReference>
<dbReference type="InterPro" id="IPR015422">
    <property type="entry name" value="PyrdxlP-dep_Trfase_small"/>
</dbReference>
<dbReference type="NCBIfam" id="TIGR00858">
    <property type="entry name" value="bioF"/>
    <property type="match status" value="1"/>
</dbReference>
<dbReference type="PANTHER" id="PTHR13693:SF100">
    <property type="entry name" value="8-AMINO-7-OXONONANOATE SYNTHASE"/>
    <property type="match status" value="1"/>
</dbReference>
<dbReference type="PANTHER" id="PTHR13693">
    <property type="entry name" value="CLASS II AMINOTRANSFERASE/8-AMINO-7-OXONONANOATE SYNTHASE"/>
    <property type="match status" value="1"/>
</dbReference>
<dbReference type="Pfam" id="PF00155">
    <property type="entry name" value="Aminotran_1_2"/>
    <property type="match status" value="1"/>
</dbReference>
<dbReference type="SUPFAM" id="SSF53383">
    <property type="entry name" value="PLP-dependent transferases"/>
    <property type="match status" value="1"/>
</dbReference>
<dbReference type="PROSITE" id="PS00599">
    <property type="entry name" value="AA_TRANSFER_CLASS_2"/>
    <property type="match status" value="1"/>
</dbReference>
<gene>
    <name evidence="1" type="primary">bioF</name>
    <name type="ordered locus">EcE24377A_0839</name>
</gene>
<accession>A7ZJI5</accession>
<feature type="chain" id="PRO_0000380967" description="8-amino-7-oxononanoate synthase">
    <location>
        <begin position="1"/>
        <end position="384"/>
    </location>
</feature>
<feature type="binding site" evidence="1">
    <location>
        <position position="21"/>
    </location>
    <ligand>
        <name>substrate</name>
    </ligand>
</feature>
<feature type="binding site" evidence="1">
    <location>
        <begin position="108"/>
        <end position="109"/>
    </location>
    <ligand>
        <name>pyridoxal 5'-phosphate</name>
        <dbReference type="ChEBI" id="CHEBI:597326"/>
    </ligand>
</feature>
<feature type="binding site" evidence="1">
    <location>
        <position position="133"/>
    </location>
    <ligand>
        <name>substrate</name>
    </ligand>
</feature>
<feature type="binding site" evidence="1">
    <location>
        <position position="179"/>
    </location>
    <ligand>
        <name>pyridoxal 5'-phosphate</name>
        <dbReference type="ChEBI" id="CHEBI:597326"/>
    </ligand>
</feature>
<feature type="binding site" evidence="1">
    <location>
        <position position="207"/>
    </location>
    <ligand>
        <name>pyridoxal 5'-phosphate</name>
        <dbReference type="ChEBI" id="CHEBI:597326"/>
    </ligand>
</feature>
<feature type="binding site" evidence="1">
    <location>
        <position position="233"/>
    </location>
    <ligand>
        <name>pyridoxal 5'-phosphate</name>
        <dbReference type="ChEBI" id="CHEBI:597326"/>
    </ligand>
</feature>
<feature type="binding site" evidence="1">
    <location>
        <position position="352"/>
    </location>
    <ligand>
        <name>substrate</name>
    </ligand>
</feature>
<feature type="modified residue" description="N6-(pyridoxal phosphate)lysine" evidence="1">
    <location>
        <position position="236"/>
    </location>
</feature>
<evidence type="ECO:0000255" key="1">
    <source>
        <dbReference type="HAMAP-Rule" id="MF_01693"/>
    </source>
</evidence>
<organism>
    <name type="scientific">Escherichia coli O139:H28 (strain E24377A / ETEC)</name>
    <dbReference type="NCBI Taxonomy" id="331111"/>
    <lineage>
        <taxon>Bacteria</taxon>
        <taxon>Pseudomonadati</taxon>
        <taxon>Pseudomonadota</taxon>
        <taxon>Gammaproteobacteria</taxon>
        <taxon>Enterobacterales</taxon>
        <taxon>Enterobacteriaceae</taxon>
        <taxon>Escherichia</taxon>
    </lineage>
</organism>